<evidence type="ECO:0000250" key="1">
    <source>
        <dbReference type="UniProtKB" id="P00918"/>
    </source>
</evidence>
<evidence type="ECO:0000250" key="2">
    <source>
        <dbReference type="UniProtKB" id="P00921"/>
    </source>
</evidence>
<evidence type="ECO:0000255" key="3">
    <source>
        <dbReference type="PROSITE-ProRule" id="PRU01134"/>
    </source>
</evidence>
<evidence type="ECO:0000305" key="4"/>
<sequence length="260" mass="29008">MSHHWGYDSHNGPAHWHEHFPIANGERQSPIAISTKAARYDPALKPLSFSYDAGTAKAIVNNGHSFNVEFDDSSDKSVLQGGALDGVYRLVQFHIHWGSCEGQGSEHTVDGVKYDAELHIVHWNVKYGKFAEALKHPDGLAVVGIFMKVGNAKPEIQKVVDALNSIQTKGKQASFTNFDPTGLLPPCRDYWTYPGSLTTPPLHECVIWHVLKEPITVSSEQMCKLRGLCFSAENEPVCRMVDNWRPCQPLKSREVRASFQ</sequence>
<protein>
    <recommendedName>
        <fullName>Carbonic anhydrase 2</fullName>
        <ecNumber evidence="1">4.2.1.1</ecNumber>
    </recommendedName>
    <alternativeName>
        <fullName>Carbonate dehydratase II</fullName>
    </alternativeName>
    <alternativeName>
        <fullName>Carbonic anhydrase II</fullName>
        <shortName>CA-II</shortName>
    </alternativeName>
    <alternativeName>
        <fullName>Cyanamide hydratase CA2</fullName>
        <ecNumber evidence="1">4.2.1.69</ecNumber>
    </alternativeName>
</protein>
<organism>
    <name type="scientific">Gallus gallus</name>
    <name type="common">Chicken</name>
    <dbReference type="NCBI Taxonomy" id="9031"/>
    <lineage>
        <taxon>Eukaryota</taxon>
        <taxon>Metazoa</taxon>
        <taxon>Chordata</taxon>
        <taxon>Craniata</taxon>
        <taxon>Vertebrata</taxon>
        <taxon>Euteleostomi</taxon>
        <taxon>Archelosauria</taxon>
        <taxon>Archosauria</taxon>
        <taxon>Dinosauria</taxon>
        <taxon>Saurischia</taxon>
        <taxon>Theropoda</taxon>
        <taxon>Coelurosauria</taxon>
        <taxon>Aves</taxon>
        <taxon>Neognathae</taxon>
        <taxon>Galloanserae</taxon>
        <taxon>Galliformes</taxon>
        <taxon>Phasianidae</taxon>
        <taxon>Phasianinae</taxon>
        <taxon>Gallus</taxon>
    </lineage>
</organism>
<reference key="1">
    <citation type="journal article" date="1994" name="Gene">
        <title>A novel carbonic anhydrase II mRNA isolated from mature chicken testis displays a TATA box and other promoter sequences in a leader 5' untranslated region not present in somatic tissues.</title>
        <authorList>
            <person name="Mezquita J."/>
            <person name="Pau M."/>
            <person name="Mezquita C."/>
        </authorList>
    </citation>
    <scope>NUCLEOTIDE SEQUENCE [MRNA]</scope>
    <source>
        <strain>Hubbard White Mountain</strain>
        <tissue>Testis</tissue>
    </source>
</reference>
<reference key="2">
    <citation type="journal article" date="1987" name="Nucleic Acids Res.">
        <title>The chicken carbonic anhydrase II gene: evidence for a recent shift in intron position.</title>
        <authorList>
            <person name="Yoshihara C.M."/>
            <person name="Lee J.-D."/>
            <person name="Dodgson J.B."/>
        </authorList>
    </citation>
    <scope>NUCLEOTIDE SEQUENCE [GENOMIC DNA / MRNA]</scope>
    <source>
        <strain>White leghorn</strain>
    </source>
</reference>
<reference key="3">
    <citation type="journal article" date="1987" name="Eur. J. Biochem.">
        <title>Sequence of carbonic anhydrase II cDNA from chick retina.</title>
        <authorList>
            <person name="Rogers J.H."/>
        </authorList>
    </citation>
    <scope>NUCLEOTIDE SEQUENCE [MRNA] OF 5-260</scope>
    <source>
        <strain>White leghorn</strain>
        <tissue>Retina</tissue>
    </source>
</reference>
<reference key="4">
    <citation type="journal article" date="1990" name="Nucleic Acids Res.">
        <title>Utilization of the second polyadenylation signal at the 3' end of the chicken carbonic anhydrase II gene.</title>
        <authorList>
            <person name="Godbout R."/>
            <person name="Andison R."/>
            <person name="Upton C."/>
            <person name="Day R."/>
        </authorList>
    </citation>
    <scope>NUCLEOTIDE SEQUENCE [MRNA] OF 222-260</scope>
    <source>
        <tissue>Retina</tissue>
    </source>
</reference>
<reference key="5">
    <citation type="journal article" date="1984" name="Ann. N. Y. Acad. Sci.">
        <title>Isolation of the chicken carbonic anhydrase II gene.</title>
        <authorList>
            <person name="Yoshihara C.M."/>
            <person name="Federspiel M."/>
            <person name="Dodgson J.B."/>
        </authorList>
    </citation>
    <scope>NUCLEOTIDE SEQUENCE [MRNA] OF 8-87</scope>
</reference>
<accession>P07630</accession>
<comment type="function">
    <text evidence="1">Catalyzes the reversible hydration of carbon dioxide. Can also hydrate cyanamide to urea.</text>
</comment>
<comment type="catalytic activity">
    <reaction evidence="1">
        <text>hydrogencarbonate + H(+) = CO2 + H2O</text>
        <dbReference type="Rhea" id="RHEA:10748"/>
        <dbReference type="ChEBI" id="CHEBI:15377"/>
        <dbReference type="ChEBI" id="CHEBI:15378"/>
        <dbReference type="ChEBI" id="CHEBI:16526"/>
        <dbReference type="ChEBI" id="CHEBI:17544"/>
        <dbReference type="EC" id="4.2.1.1"/>
    </reaction>
</comment>
<comment type="catalytic activity">
    <reaction evidence="1">
        <text>urea = cyanamide + H2O</text>
        <dbReference type="Rhea" id="RHEA:23056"/>
        <dbReference type="ChEBI" id="CHEBI:15377"/>
        <dbReference type="ChEBI" id="CHEBI:16199"/>
        <dbReference type="ChEBI" id="CHEBI:16698"/>
        <dbReference type="EC" id="4.2.1.69"/>
    </reaction>
</comment>
<comment type="cofactor">
    <cofactor evidence="2">
        <name>Zn(2+)</name>
        <dbReference type="ChEBI" id="CHEBI:29105"/>
    </cofactor>
</comment>
<comment type="activity regulation">
    <text evidence="1">Inhibited by acetazolamide.</text>
</comment>
<comment type="subcellular location">
    <subcellularLocation>
        <location evidence="1">Cytoplasm</location>
    </subcellularLocation>
    <subcellularLocation>
        <location evidence="1">Cell membrane</location>
    </subcellularLocation>
</comment>
<comment type="similarity">
    <text evidence="4">Belongs to the alpha-carbonic anhydrase family.</text>
</comment>
<proteinExistence type="evidence at transcript level"/>
<gene>
    <name type="primary">CA2</name>
</gene>
<feature type="initiator methionine" description="Removed" evidence="1">
    <location>
        <position position="1"/>
    </location>
</feature>
<feature type="chain" id="PRO_0000077423" description="Carbonic anhydrase 2">
    <location>
        <begin position="2"/>
        <end position="260"/>
    </location>
</feature>
<feature type="domain" description="Alpha-carbonic anhydrase" evidence="3">
    <location>
        <begin position="3"/>
        <end position="259"/>
    </location>
</feature>
<feature type="active site" description="Proton donor/acceptor" evidence="1">
    <location>
        <position position="64"/>
    </location>
</feature>
<feature type="binding site" evidence="1">
    <location>
        <position position="94"/>
    </location>
    <ligand>
        <name>Zn(2+)</name>
        <dbReference type="ChEBI" id="CHEBI:29105"/>
        <note>catalytic</note>
    </ligand>
</feature>
<feature type="binding site" evidence="1">
    <location>
        <position position="96"/>
    </location>
    <ligand>
        <name>Zn(2+)</name>
        <dbReference type="ChEBI" id="CHEBI:29105"/>
        <note>catalytic</note>
    </ligand>
</feature>
<feature type="binding site" evidence="1">
    <location>
        <position position="119"/>
    </location>
    <ligand>
        <name>Zn(2+)</name>
        <dbReference type="ChEBI" id="CHEBI:29105"/>
        <note>catalytic</note>
    </ligand>
</feature>
<feature type="binding site" evidence="1">
    <location>
        <begin position="198"/>
        <end position="199"/>
    </location>
    <ligand>
        <name>substrate</name>
    </ligand>
</feature>
<feature type="site" description="Fine-tunes the proton-transfer properties of H-64" evidence="1">
    <location>
        <position position="7"/>
    </location>
</feature>
<feature type="site" description="Fine-tunes the proton-transfer properties of H-64" evidence="1">
    <location>
        <position position="62"/>
    </location>
</feature>
<feature type="site" description="Fine-tunes the proton-transfer properties of H-64" evidence="1">
    <location>
        <position position="67"/>
    </location>
</feature>
<feature type="sequence conflict" description="In Ref. 3; CAA28501." evidence="4" ref="3">
    <original>W</original>
    <variation>L</variation>
    <location>
        <position position="5"/>
    </location>
</feature>
<feature type="sequence conflict" description="In Ref. 5; AAA48646." evidence="4" ref="5">
    <original>D</original>
    <variation>G</variation>
    <location>
        <position position="8"/>
    </location>
</feature>
<feature type="sequence conflict" description="In Ref. 5; AAA48646." evidence="4" ref="5">
    <original>V</original>
    <variation>S</variation>
    <location>
        <position position="87"/>
    </location>
</feature>
<feature type="sequence conflict" description="In Ref. 2; CAA31175/CAA29417." evidence="4" ref="2">
    <original>L</original>
    <variation>V</variation>
    <location>
        <position position="250"/>
    </location>
</feature>
<name>CAH2_CHICK</name>
<dbReference type="EC" id="4.2.1.1" evidence="1"/>
<dbReference type="EC" id="4.2.1.69" evidence="1"/>
<dbReference type="EMBL" id="Z14957">
    <property type="protein sequence ID" value="CAA78681.1"/>
    <property type="molecule type" value="mRNA"/>
</dbReference>
<dbReference type="EMBL" id="X12639">
    <property type="protein sequence ID" value="CAA31175.1"/>
    <property type="molecule type" value="mRNA"/>
</dbReference>
<dbReference type="EMBL" id="X06000">
    <property type="protein sequence ID" value="CAA29417.1"/>
    <property type="molecule type" value="Genomic_DNA"/>
</dbReference>
<dbReference type="EMBL" id="X06001">
    <property type="protein sequence ID" value="CAA29417.1"/>
    <property type="status" value="JOINED"/>
    <property type="molecule type" value="Genomic_DNA"/>
</dbReference>
<dbReference type="EMBL" id="X06002">
    <property type="protein sequence ID" value="CAA29417.1"/>
    <property type="status" value="JOINED"/>
    <property type="molecule type" value="Genomic_DNA"/>
</dbReference>
<dbReference type="EMBL" id="X06003">
    <property type="protein sequence ID" value="CAA29417.1"/>
    <property type="status" value="JOINED"/>
    <property type="molecule type" value="Genomic_DNA"/>
</dbReference>
<dbReference type="EMBL" id="X06004">
    <property type="protein sequence ID" value="CAA29417.1"/>
    <property type="status" value="JOINED"/>
    <property type="molecule type" value="Genomic_DNA"/>
</dbReference>
<dbReference type="EMBL" id="X06005">
    <property type="protein sequence ID" value="CAA29417.1"/>
    <property type="status" value="JOINED"/>
    <property type="molecule type" value="Genomic_DNA"/>
</dbReference>
<dbReference type="EMBL" id="X04810">
    <property type="protein sequence ID" value="CAA28501.1"/>
    <property type="molecule type" value="mRNA"/>
</dbReference>
<dbReference type="EMBL" id="X17378">
    <property type="protein sequence ID" value="CAA35250.1"/>
    <property type="molecule type" value="mRNA"/>
</dbReference>
<dbReference type="EMBL" id="M25943">
    <property type="protein sequence ID" value="AAA48646.1"/>
    <property type="molecule type" value="mRNA"/>
</dbReference>
<dbReference type="PIR" id="JC2580">
    <property type="entry name" value="JC2580"/>
</dbReference>
<dbReference type="RefSeq" id="NP_990648.1">
    <property type="nucleotide sequence ID" value="NM_205317.2"/>
</dbReference>
<dbReference type="SMR" id="P07630"/>
<dbReference type="FunCoup" id="P07630">
    <property type="interactions" value="1513"/>
</dbReference>
<dbReference type="STRING" id="9031.ENSGALP00000056391"/>
<dbReference type="PaxDb" id="9031-ENSGALP00000025525"/>
<dbReference type="Ensembl" id="ENSGALT00010032073.1">
    <property type="protein sequence ID" value="ENSGALP00010018863.1"/>
    <property type="gene ID" value="ENSGALG00010013325.1"/>
</dbReference>
<dbReference type="GeneID" id="396257"/>
<dbReference type="KEGG" id="gga:396257"/>
<dbReference type="CTD" id="760"/>
<dbReference type="VEuPathDB" id="HostDB:geneid_396257"/>
<dbReference type="eggNOG" id="KOG0382">
    <property type="taxonomic scope" value="Eukaryota"/>
</dbReference>
<dbReference type="GeneTree" id="ENSGT00940000160385"/>
<dbReference type="HOGENOM" id="CLU_039326_2_1_1"/>
<dbReference type="InParanoid" id="P07630"/>
<dbReference type="OMA" id="INPHWKV"/>
<dbReference type="OrthoDB" id="429145at2759"/>
<dbReference type="PhylomeDB" id="P07630"/>
<dbReference type="TreeFam" id="TF316425"/>
<dbReference type="Reactome" id="R-GGA-1237044">
    <property type="pathway name" value="Erythrocytes take up carbon dioxide and release oxygen"/>
</dbReference>
<dbReference type="Reactome" id="R-GGA-1247673">
    <property type="pathway name" value="Erythrocytes take up oxygen and release carbon dioxide"/>
</dbReference>
<dbReference type="Reactome" id="R-GGA-1475029">
    <property type="pathway name" value="Reversible hydration of carbon dioxide"/>
</dbReference>
<dbReference type="PRO" id="PR:P07630"/>
<dbReference type="Proteomes" id="UP000000539">
    <property type="component" value="Chromosome 2"/>
</dbReference>
<dbReference type="Bgee" id="ENSGALG00000030781">
    <property type="expression patterns" value="Expressed in lung and 13 other cell types or tissues"/>
</dbReference>
<dbReference type="GO" id="GO:0045177">
    <property type="term" value="C:apical part of cell"/>
    <property type="evidence" value="ECO:0000318"/>
    <property type="project" value="GO_Central"/>
</dbReference>
<dbReference type="GO" id="GO:0005737">
    <property type="term" value="C:cytoplasm"/>
    <property type="evidence" value="ECO:0000314"/>
    <property type="project" value="AgBase"/>
</dbReference>
<dbReference type="GO" id="GO:0005886">
    <property type="term" value="C:plasma membrane"/>
    <property type="evidence" value="ECO:0000250"/>
    <property type="project" value="UniProtKB"/>
</dbReference>
<dbReference type="GO" id="GO:0004089">
    <property type="term" value="F:carbonate dehydratase activity"/>
    <property type="evidence" value="ECO:0000314"/>
    <property type="project" value="AgBase"/>
</dbReference>
<dbReference type="GO" id="GO:0018820">
    <property type="term" value="F:cyanamide hydratase activity"/>
    <property type="evidence" value="ECO:0007669"/>
    <property type="project" value="RHEA"/>
</dbReference>
<dbReference type="GO" id="GO:0008270">
    <property type="term" value="F:zinc ion binding"/>
    <property type="evidence" value="ECO:0007669"/>
    <property type="project" value="InterPro"/>
</dbReference>
<dbReference type="GO" id="GO:0015670">
    <property type="term" value="P:carbon dioxide transport"/>
    <property type="evidence" value="ECO:0000318"/>
    <property type="project" value="GO_Central"/>
</dbReference>
<dbReference type="GO" id="GO:0071244">
    <property type="term" value="P:cellular response to carbon dioxide"/>
    <property type="evidence" value="ECO:0000314"/>
    <property type="project" value="AgBase"/>
</dbReference>
<dbReference type="GO" id="GO:0051453">
    <property type="term" value="P:regulation of intracellular pH"/>
    <property type="evidence" value="ECO:0000318"/>
    <property type="project" value="GO_Central"/>
</dbReference>
<dbReference type="CDD" id="cd03119">
    <property type="entry name" value="alpha_CA_I_II_III_XIII"/>
    <property type="match status" value="1"/>
</dbReference>
<dbReference type="FunFam" id="3.10.200.10:FF:000001">
    <property type="entry name" value="Carbonic anhydrase 2"/>
    <property type="match status" value="1"/>
</dbReference>
<dbReference type="Gene3D" id="3.10.200.10">
    <property type="entry name" value="Alpha carbonic anhydrase"/>
    <property type="match status" value="1"/>
</dbReference>
<dbReference type="InterPro" id="IPR001148">
    <property type="entry name" value="CA_dom"/>
</dbReference>
<dbReference type="InterPro" id="IPR036398">
    <property type="entry name" value="CA_dom_sf"/>
</dbReference>
<dbReference type="InterPro" id="IPR023561">
    <property type="entry name" value="Carbonic_anhydrase_a-class"/>
</dbReference>
<dbReference type="InterPro" id="IPR018338">
    <property type="entry name" value="Carbonic_anhydrase_a-class_CS"/>
</dbReference>
<dbReference type="PANTHER" id="PTHR18952">
    <property type="entry name" value="CARBONIC ANHYDRASE"/>
    <property type="match status" value="1"/>
</dbReference>
<dbReference type="PANTHER" id="PTHR18952:SF120">
    <property type="entry name" value="CARBONIC ANHYDRASE 2"/>
    <property type="match status" value="1"/>
</dbReference>
<dbReference type="Pfam" id="PF00194">
    <property type="entry name" value="Carb_anhydrase"/>
    <property type="match status" value="1"/>
</dbReference>
<dbReference type="SMART" id="SM01057">
    <property type="entry name" value="Carb_anhydrase"/>
    <property type="match status" value="1"/>
</dbReference>
<dbReference type="SUPFAM" id="SSF51069">
    <property type="entry name" value="Carbonic anhydrase"/>
    <property type="match status" value="1"/>
</dbReference>
<dbReference type="PROSITE" id="PS00162">
    <property type="entry name" value="ALPHA_CA_1"/>
    <property type="match status" value="1"/>
</dbReference>
<dbReference type="PROSITE" id="PS51144">
    <property type="entry name" value="ALPHA_CA_2"/>
    <property type="match status" value="1"/>
</dbReference>
<keyword id="KW-1003">Cell membrane</keyword>
<keyword id="KW-0963">Cytoplasm</keyword>
<keyword id="KW-0456">Lyase</keyword>
<keyword id="KW-0472">Membrane</keyword>
<keyword id="KW-0479">Metal-binding</keyword>
<keyword id="KW-1185">Reference proteome</keyword>
<keyword id="KW-0862">Zinc</keyword>